<organismHost>
    <name type="scientific">Oryctolagus cuniculus</name>
    <name type="common">Rabbit</name>
    <dbReference type="NCBI Taxonomy" id="9986"/>
</organismHost>
<reference key="1">
    <citation type="journal article" date="1999" name="Virology">
        <title>The complete DNA sequence of myxoma virus.</title>
        <authorList>
            <person name="Cameron C."/>
            <person name="Hota-Mitchell S."/>
            <person name="Chen L."/>
            <person name="Barrett J.W."/>
            <person name="Cao J.-X."/>
            <person name="Macaulay C."/>
            <person name="Willer D.O."/>
            <person name="Evans D.H."/>
            <person name="McFadden G."/>
        </authorList>
    </citation>
    <scope>NUCLEOTIDE SEQUENCE [LARGE SCALE GENOMIC DNA]</scope>
</reference>
<gene>
    <name type="primary">OPG103</name>
    <name type="synonym">RPO22</name>
    <name type="ordered locus">m066R</name>
</gene>
<name>RP22_MYXVL</name>
<sequence>MNPHNVKYLAKILCLKAEIQKNPYAVISKDVVHRYSTDIRYGDLTTIISVRHKTSTSNTVFQVFNESSVNYTPVDNDYGYPIIITSFLQTGHNKFPISFLYIDVVASDVFPKFARLSPTDVATVYSVLQIGDTKDALKLPRMLETEISAKILFHKDFPLKIVRFFKNNMVTGEEISDRSLVAVLE</sequence>
<keyword id="KW-0240">DNA-directed RNA polymerase</keyword>
<keyword id="KW-0548">Nucleotidyltransferase</keyword>
<keyword id="KW-1185">Reference proteome</keyword>
<keyword id="KW-0804">Transcription</keyword>
<keyword id="KW-0808">Transferase</keyword>
<keyword id="KW-0946">Virion</keyword>
<protein>
    <recommendedName>
        <fullName>DNA-directed RNA polymerase 21 kDa subunit</fullName>
        <ecNumber>2.7.7.6</ecNumber>
    </recommendedName>
</protein>
<dbReference type="EC" id="2.7.7.6"/>
<dbReference type="EMBL" id="AF170726">
    <property type="protein sequence ID" value="AAF14954.1"/>
    <property type="molecule type" value="Genomic_DNA"/>
</dbReference>
<dbReference type="RefSeq" id="NP_051780.1">
    <property type="nucleotide sequence ID" value="NC_001132.2"/>
</dbReference>
<dbReference type="SMR" id="P68546"/>
<dbReference type="GeneID" id="932185"/>
<dbReference type="KEGG" id="vg:932185"/>
<dbReference type="Proteomes" id="UP000000867">
    <property type="component" value="Segment"/>
</dbReference>
<dbReference type="GO" id="GO:0000428">
    <property type="term" value="C:DNA-directed RNA polymerase complex"/>
    <property type="evidence" value="ECO:0007669"/>
    <property type="project" value="UniProtKB-KW"/>
</dbReference>
<dbReference type="GO" id="GO:0044423">
    <property type="term" value="C:virion component"/>
    <property type="evidence" value="ECO:0007669"/>
    <property type="project" value="UniProtKB-KW"/>
</dbReference>
<dbReference type="GO" id="GO:0003677">
    <property type="term" value="F:DNA binding"/>
    <property type="evidence" value="ECO:0007669"/>
    <property type="project" value="InterPro"/>
</dbReference>
<dbReference type="GO" id="GO:0003899">
    <property type="term" value="F:DNA-directed RNA polymerase activity"/>
    <property type="evidence" value="ECO:0007669"/>
    <property type="project" value="UniProtKB-EC"/>
</dbReference>
<dbReference type="GO" id="GO:0019083">
    <property type="term" value="P:viral transcription"/>
    <property type="evidence" value="ECO:0007669"/>
    <property type="project" value="InterPro"/>
</dbReference>
<dbReference type="InterPro" id="IPR007937">
    <property type="entry name" value="RNA_Pol_22kDa_poxvir"/>
</dbReference>
<dbReference type="Pfam" id="PF05273">
    <property type="entry name" value="Pox_RNA_Pol_22"/>
    <property type="match status" value="1"/>
</dbReference>
<dbReference type="PIRSF" id="PIRSF000744">
    <property type="entry name" value="RPO22"/>
    <property type="match status" value="1"/>
</dbReference>
<accession>P68546</accession>
<accession>P18620</accession>
<proteinExistence type="inferred from homology"/>
<evidence type="ECO:0000250" key="1">
    <source>
        <dbReference type="UniProtKB" id="P68609"/>
    </source>
</evidence>
<evidence type="ECO:0000305" key="2"/>
<organism>
    <name type="scientific">Myxoma virus (strain Lausanne)</name>
    <name type="common">MYXV</name>
    <dbReference type="NCBI Taxonomy" id="31530"/>
    <lineage>
        <taxon>Viruses</taxon>
        <taxon>Varidnaviria</taxon>
        <taxon>Bamfordvirae</taxon>
        <taxon>Nucleocytoviricota</taxon>
        <taxon>Pokkesviricetes</taxon>
        <taxon>Chitovirales</taxon>
        <taxon>Poxviridae</taxon>
        <taxon>Chordopoxvirinae</taxon>
        <taxon>Leporipoxvirus</taxon>
        <taxon>Myxoma virus</taxon>
    </lineage>
</organism>
<feature type="chain" id="PRO_0000099143" description="DNA-directed RNA polymerase 21 kDa subunit">
    <location>
        <begin position="1"/>
        <end position="185"/>
    </location>
</feature>
<comment type="function">
    <text evidence="1">Part of the DNA-dependent RNA polymerase which catalyzes the transcription of viral DNA into RNA using the four ribonucleoside triphosphates as substrates. Responsible for the transcription of early, intermediate and late genes. DNA-dependent RNA polymerase associates with the early transcription factor (ETF), itself composed of OPG118 and OPG133, thereby allowing the early genes transcription. Late transcription, and probably also intermediate transcription, require newly synthesized RNA polymerase.</text>
</comment>
<comment type="catalytic activity">
    <reaction evidence="1">
        <text>RNA(n) + a ribonucleoside 5'-triphosphate = RNA(n+1) + diphosphate</text>
        <dbReference type="Rhea" id="RHEA:21248"/>
        <dbReference type="Rhea" id="RHEA-COMP:14527"/>
        <dbReference type="Rhea" id="RHEA-COMP:17342"/>
        <dbReference type="ChEBI" id="CHEBI:33019"/>
        <dbReference type="ChEBI" id="CHEBI:61557"/>
        <dbReference type="ChEBI" id="CHEBI:140395"/>
        <dbReference type="EC" id="2.7.7.6"/>
    </reaction>
</comment>
<comment type="subunit">
    <text evidence="1">The DNA-dependent RNA polymerase used for intermediate and late genes expression consists of eight subunits Rpo30/OPG66, Rpo7/OPG90, Rpo22/OPG103, Rpo147/OPG105, Rpo18/OPG119, Rpo19/OPG131, Rpo132/OPG151 and Rpo35/OPG156. The same holoenzyme, with the addition of the transcription-specificity factor OPG109, is used for early gene expression.</text>
</comment>
<comment type="subcellular location">
    <subcellularLocation>
        <location evidence="1">Virion</location>
    </subcellularLocation>
    <text evidence="1">All the enzymes and other proteins required to synthesize early mRNAs are packaged within the virion core along with the DNA genome. This is necessary because viral early mRNAs are synthesized within minutes after virus entry into the cell and are extruded through pores in the core particle.</text>
</comment>
<comment type="similarity">
    <text evidence="2">Belongs to the poxviridae DNA-directed RNA polymerase 22 kDa subunit family.</text>
</comment>